<protein>
    <recommendedName>
        <fullName evidence="1">3-isopropylmalate dehydratase large subunit</fullName>
        <ecNumber evidence="1">4.2.1.33</ecNumber>
    </recommendedName>
    <alternativeName>
        <fullName evidence="1">Alpha-IPM isomerase</fullName>
        <shortName evidence="1">IPMI</shortName>
    </alternativeName>
    <alternativeName>
        <fullName evidence="1">Isopropylmalate isomerase</fullName>
    </alternativeName>
</protein>
<dbReference type="EC" id="4.2.1.33" evidence="1"/>
<dbReference type="EMBL" id="CP000155">
    <property type="protein sequence ID" value="ABC29236.1"/>
    <property type="molecule type" value="Genomic_DNA"/>
</dbReference>
<dbReference type="RefSeq" id="WP_011396305.1">
    <property type="nucleotide sequence ID" value="NC_007645.1"/>
</dbReference>
<dbReference type="SMR" id="Q2SJD8"/>
<dbReference type="STRING" id="349521.HCH_02428"/>
<dbReference type="KEGG" id="hch:HCH_02428"/>
<dbReference type="eggNOG" id="COG0065">
    <property type="taxonomic scope" value="Bacteria"/>
</dbReference>
<dbReference type="HOGENOM" id="CLU_006714_3_4_6"/>
<dbReference type="OrthoDB" id="9802769at2"/>
<dbReference type="UniPathway" id="UPA00048">
    <property type="reaction ID" value="UER00071"/>
</dbReference>
<dbReference type="Proteomes" id="UP000000238">
    <property type="component" value="Chromosome"/>
</dbReference>
<dbReference type="GO" id="GO:0003861">
    <property type="term" value="F:3-isopropylmalate dehydratase activity"/>
    <property type="evidence" value="ECO:0007669"/>
    <property type="project" value="UniProtKB-UniRule"/>
</dbReference>
<dbReference type="GO" id="GO:0051539">
    <property type="term" value="F:4 iron, 4 sulfur cluster binding"/>
    <property type="evidence" value="ECO:0007669"/>
    <property type="project" value="UniProtKB-KW"/>
</dbReference>
<dbReference type="GO" id="GO:0046872">
    <property type="term" value="F:metal ion binding"/>
    <property type="evidence" value="ECO:0007669"/>
    <property type="project" value="UniProtKB-KW"/>
</dbReference>
<dbReference type="GO" id="GO:0009098">
    <property type="term" value="P:L-leucine biosynthetic process"/>
    <property type="evidence" value="ECO:0007669"/>
    <property type="project" value="UniProtKB-UniRule"/>
</dbReference>
<dbReference type="CDD" id="cd01583">
    <property type="entry name" value="IPMI"/>
    <property type="match status" value="1"/>
</dbReference>
<dbReference type="FunFam" id="3.30.499.10:FF:000007">
    <property type="entry name" value="3-isopropylmalate dehydratase large subunit"/>
    <property type="match status" value="1"/>
</dbReference>
<dbReference type="Gene3D" id="3.30.499.10">
    <property type="entry name" value="Aconitase, domain 3"/>
    <property type="match status" value="2"/>
</dbReference>
<dbReference type="HAMAP" id="MF_01026">
    <property type="entry name" value="LeuC_type1"/>
    <property type="match status" value="1"/>
</dbReference>
<dbReference type="InterPro" id="IPR004430">
    <property type="entry name" value="3-IsopropMal_deHydase_lsu"/>
</dbReference>
<dbReference type="InterPro" id="IPR015931">
    <property type="entry name" value="Acnase/IPM_dHydase_lsu_aba_1/3"/>
</dbReference>
<dbReference type="InterPro" id="IPR001030">
    <property type="entry name" value="Acoase/IPM_deHydtase_lsu_aba"/>
</dbReference>
<dbReference type="InterPro" id="IPR018136">
    <property type="entry name" value="Aconitase_4Fe-4S_BS"/>
</dbReference>
<dbReference type="InterPro" id="IPR036008">
    <property type="entry name" value="Aconitase_4Fe-4S_dom"/>
</dbReference>
<dbReference type="InterPro" id="IPR050067">
    <property type="entry name" value="IPM_dehydratase_rel_enz"/>
</dbReference>
<dbReference type="InterPro" id="IPR033941">
    <property type="entry name" value="IPMI_cat"/>
</dbReference>
<dbReference type="NCBIfam" id="TIGR00170">
    <property type="entry name" value="leuC"/>
    <property type="match status" value="1"/>
</dbReference>
<dbReference type="NCBIfam" id="NF004016">
    <property type="entry name" value="PRK05478.1"/>
    <property type="match status" value="1"/>
</dbReference>
<dbReference type="NCBIfam" id="NF009116">
    <property type="entry name" value="PRK12466.1"/>
    <property type="match status" value="1"/>
</dbReference>
<dbReference type="PANTHER" id="PTHR43822:SF9">
    <property type="entry name" value="3-ISOPROPYLMALATE DEHYDRATASE"/>
    <property type="match status" value="1"/>
</dbReference>
<dbReference type="PANTHER" id="PTHR43822">
    <property type="entry name" value="HOMOACONITASE, MITOCHONDRIAL-RELATED"/>
    <property type="match status" value="1"/>
</dbReference>
<dbReference type="Pfam" id="PF00330">
    <property type="entry name" value="Aconitase"/>
    <property type="match status" value="1"/>
</dbReference>
<dbReference type="PRINTS" id="PR00415">
    <property type="entry name" value="ACONITASE"/>
</dbReference>
<dbReference type="SUPFAM" id="SSF53732">
    <property type="entry name" value="Aconitase iron-sulfur domain"/>
    <property type="match status" value="1"/>
</dbReference>
<dbReference type="PROSITE" id="PS00450">
    <property type="entry name" value="ACONITASE_1"/>
    <property type="match status" value="1"/>
</dbReference>
<dbReference type="PROSITE" id="PS01244">
    <property type="entry name" value="ACONITASE_2"/>
    <property type="match status" value="1"/>
</dbReference>
<name>LEUC_HAHCH</name>
<gene>
    <name evidence="1" type="primary">leuC</name>
    <name type="ordered locus">HCH_02428</name>
</gene>
<accession>Q2SJD8</accession>
<reference key="1">
    <citation type="journal article" date="2005" name="Nucleic Acids Res.">
        <title>Genomic blueprint of Hahella chejuensis, a marine microbe producing an algicidal agent.</title>
        <authorList>
            <person name="Jeong H."/>
            <person name="Yim J.H."/>
            <person name="Lee C."/>
            <person name="Choi S.-H."/>
            <person name="Park Y.K."/>
            <person name="Yoon S.H."/>
            <person name="Hur C.-G."/>
            <person name="Kang H.-Y."/>
            <person name="Kim D."/>
            <person name="Lee H.H."/>
            <person name="Park K.H."/>
            <person name="Park S.-H."/>
            <person name="Park H.-S."/>
            <person name="Lee H.K."/>
            <person name="Oh T.K."/>
            <person name="Kim J.F."/>
        </authorList>
    </citation>
    <scope>NUCLEOTIDE SEQUENCE [LARGE SCALE GENOMIC DNA]</scope>
    <source>
        <strain>KCTC 2396</strain>
    </source>
</reference>
<feature type="chain" id="PRO_1000063559" description="3-isopropylmalate dehydratase large subunit">
    <location>
        <begin position="1"/>
        <end position="471"/>
    </location>
</feature>
<feature type="binding site" evidence="1">
    <location>
        <position position="351"/>
    </location>
    <ligand>
        <name>[4Fe-4S] cluster</name>
        <dbReference type="ChEBI" id="CHEBI:49883"/>
    </ligand>
</feature>
<feature type="binding site" evidence="1">
    <location>
        <position position="412"/>
    </location>
    <ligand>
        <name>[4Fe-4S] cluster</name>
        <dbReference type="ChEBI" id="CHEBI:49883"/>
    </ligand>
</feature>
<feature type="binding site" evidence="1">
    <location>
        <position position="415"/>
    </location>
    <ligand>
        <name>[4Fe-4S] cluster</name>
        <dbReference type="ChEBI" id="CHEBI:49883"/>
    </ligand>
</feature>
<sequence length="471" mass="50388">MAGKTLYDKLWDSHVVKQRDDGSALIYIDRQLLHEVTSPQAFEGLRLAGRKPWRVDANLATPDHNVPTTERSAGVQGIEDPISRIQVQTLDENCEEFGIVEFKMLDKRQGIVHVIGPEQGATLPGMTIVCGDSHTSTHGAFAALAHGIGTSEVEHVLATQCLVQKKMKNLLIKVNGQLARGVTAKDVILAIIGEIGTAGGTGYAMEFAGEAIESLSMEGRMTICNMAIEAGARAGLVAVDDKTIEYVKGRPYSPKGELWDKAVAAWRDLKSDSDAVFDKVVELNGADIEPQVTWGTSPEMVAGVSGSVPDPEKAEDATAKEGISRALKYMGLQAGAAITDIKLDRVFIGSCTNSRIEDLREAAAVVKGRKVAANVKQALVVPGSGLVKEQAEQEGLDKIFIEAGLEWREPGCSMCLAMNADKLGQGEHCASTSNRNFEGRQGFGGRTHLVSPAMAAAAAVFGHFVDVRELI</sequence>
<evidence type="ECO:0000255" key="1">
    <source>
        <dbReference type="HAMAP-Rule" id="MF_01026"/>
    </source>
</evidence>
<organism>
    <name type="scientific">Hahella chejuensis (strain KCTC 2396)</name>
    <dbReference type="NCBI Taxonomy" id="349521"/>
    <lineage>
        <taxon>Bacteria</taxon>
        <taxon>Pseudomonadati</taxon>
        <taxon>Pseudomonadota</taxon>
        <taxon>Gammaproteobacteria</taxon>
        <taxon>Oceanospirillales</taxon>
        <taxon>Hahellaceae</taxon>
        <taxon>Hahella</taxon>
    </lineage>
</organism>
<proteinExistence type="inferred from homology"/>
<keyword id="KW-0004">4Fe-4S</keyword>
<keyword id="KW-0028">Amino-acid biosynthesis</keyword>
<keyword id="KW-0100">Branched-chain amino acid biosynthesis</keyword>
<keyword id="KW-0408">Iron</keyword>
<keyword id="KW-0411">Iron-sulfur</keyword>
<keyword id="KW-0432">Leucine biosynthesis</keyword>
<keyword id="KW-0456">Lyase</keyword>
<keyword id="KW-0479">Metal-binding</keyword>
<keyword id="KW-1185">Reference proteome</keyword>
<comment type="function">
    <text evidence="1">Catalyzes the isomerization between 2-isopropylmalate and 3-isopropylmalate, via the formation of 2-isopropylmaleate.</text>
</comment>
<comment type="catalytic activity">
    <reaction evidence="1">
        <text>(2R,3S)-3-isopropylmalate = (2S)-2-isopropylmalate</text>
        <dbReference type="Rhea" id="RHEA:32287"/>
        <dbReference type="ChEBI" id="CHEBI:1178"/>
        <dbReference type="ChEBI" id="CHEBI:35121"/>
        <dbReference type="EC" id="4.2.1.33"/>
    </reaction>
</comment>
<comment type="cofactor">
    <cofactor evidence="1">
        <name>[4Fe-4S] cluster</name>
        <dbReference type="ChEBI" id="CHEBI:49883"/>
    </cofactor>
    <text evidence="1">Binds 1 [4Fe-4S] cluster per subunit.</text>
</comment>
<comment type="pathway">
    <text evidence="1">Amino-acid biosynthesis; L-leucine biosynthesis; L-leucine from 3-methyl-2-oxobutanoate: step 2/4.</text>
</comment>
<comment type="subunit">
    <text evidence="1">Heterodimer of LeuC and LeuD.</text>
</comment>
<comment type="similarity">
    <text evidence="1">Belongs to the aconitase/IPM isomerase family. LeuC type 1 subfamily.</text>
</comment>